<gene>
    <name evidence="1" type="primary">clpX</name>
    <name type="ordered locus">LMOf2365_1286</name>
</gene>
<protein>
    <recommendedName>
        <fullName evidence="1">ATP-dependent Clp protease ATP-binding subunit ClpX</fullName>
    </recommendedName>
</protein>
<comment type="function">
    <text evidence="1">ATP-dependent specificity component of the Clp protease. It directs the protease to specific substrates. Can perform chaperone functions in the absence of ClpP.</text>
</comment>
<comment type="subunit">
    <text evidence="1">Component of the ClpX-ClpP complex. Forms a hexameric ring that, in the presence of ATP, binds to fourteen ClpP subunits assembled into a disk-like structure with a central cavity, resembling the structure of eukaryotic proteasomes.</text>
</comment>
<comment type="similarity">
    <text evidence="1">Belongs to the ClpX chaperone family.</text>
</comment>
<evidence type="ECO:0000255" key="1">
    <source>
        <dbReference type="HAMAP-Rule" id="MF_00175"/>
    </source>
</evidence>
<evidence type="ECO:0000255" key="2">
    <source>
        <dbReference type="PROSITE-ProRule" id="PRU01250"/>
    </source>
</evidence>
<reference key="1">
    <citation type="journal article" date="2004" name="Nucleic Acids Res.">
        <title>Whole genome comparisons of serotype 4b and 1/2a strains of the food-borne pathogen Listeria monocytogenes reveal new insights into the core genome components of this species.</title>
        <authorList>
            <person name="Nelson K.E."/>
            <person name="Fouts D.E."/>
            <person name="Mongodin E.F."/>
            <person name="Ravel J."/>
            <person name="DeBoy R.T."/>
            <person name="Kolonay J.F."/>
            <person name="Rasko D.A."/>
            <person name="Angiuoli S.V."/>
            <person name="Gill S.R."/>
            <person name="Paulsen I.T."/>
            <person name="Peterson J.D."/>
            <person name="White O."/>
            <person name="Nelson W.C."/>
            <person name="Nierman W.C."/>
            <person name="Beanan M.J."/>
            <person name="Brinkac L.M."/>
            <person name="Daugherty S.C."/>
            <person name="Dodson R.J."/>
            <person name="Durkin A.S."/>
            <person name="Madupu R."/>
            <person name="Haft D.H."/>
            <person name="Selengut J."/>
            <person name="Van Aken S.E."/>
            <person name="Khouri H.M."/>
            <person name="Fedorova N."/>
            <person name="Forberger H.A."/>
            <person name="Tran B."/>
            <person name="Kathariou S."/>
            <person name="Wonderling L.D."/>
            <person name="Uhlich G.A."/>
            <person name="Bayles D.O."/>
            <person name="Luchansky J.B."/>
            <person name="Fraser C.M."/>
        </authorList>
    </citation>
    <scope>NUCLEOTIDE SEQUENCE [LARGE SCALE GENOMIC DNA]</scope>
    <source>
        <strain>F2365</strain>
    </source>
</reference>
<keyword id="KW-0067">ATP-binding</keyword>
<keyword id="KW-0143">Chaperone</keyword>
<keyword id="KW-0479">Metal-binding</keyword>
<keyword id="KW-0547">Nucleotide-binding</keyword>
<keyword id="KW-0862">Zinc</keyword>
<name>CLPX_LISMF</name>
<dbReference type="EMBL" id="AE017262">
    <property type="protein sequence ID" value="AAT04061.1"/>
    <property type="molecule type" value="Genomic_DNA"/>
</dbReference>
<dbReference type="RefSeq" id="WP_003723886.1">
    <property type="nucleotide sequence ID" value="NC_002973.6"/>
</dbReference>
<dbReference type="SMR" id="Q720F3"/>
<dbReference type="KEGG" id="lmf:LMOf2365_1286"/>
<dbReference type="HOGENOM" id="CLU_014218_8_2_9"/>
<dbReference type="GO" id="GO:0009376">
    <property type="term" value="C:HslUV protease complex"/>
    <property type="evidence" value="ECO:0007669"/>
    <property type="project" value="TreeGrafter"/>
</dbReference>
<dbReference type="GO" id="GO:0005524">
    <property type="term" value="F:ATP binding"/>
    <property type="evidence" value="ECO:0007669"/>
    <property type="project" value="UniProtKB-UniRule"/>
</dbReference>
<dbReference type="GO" id="GO:0016887">
    <property type="term" value="F:ATP hydrolysis activity"/>
    <property type="evidence" value="ECO:0007669"/>
    <property type="project" value="InterPro"/>
</dbReference>
<dbReference type="GO" id="GO:0140662">
    <property type="term" value="F:ATP-dependent protein folding chaperone"/>
    <property type="evidence" value="ECO:0007669"/>
    <property type="project" value="InterPro"/>
</dbReference>
<dbReference type="GO" id="GO:0046983">
    <property type="term" value="F:protein dimerization activity"/>
    <property type="evidence" value="ECO:0007669"/>
    <property type="project" value="InterPro"/>
</dbReference>
<dbReference type="GO" id="GO:0051082">
    <property type="term" value="F:unfolded protein binding"/>
    <property type="evidence" value="ECO:0007669"/>
    <property type="project" value="UniProtKB-UniRule"/>
</dbReference>
<dbReference type="GO" id="GO:0008270">
    <property type="term" value="F:zinc ion binding"/>
    <property type="evidence" value="ECO:0007669"/>
    <property type="project" value="InterPro"/>
</dbReference>
<dbReference type="GO" id="GO:0051301">
    <property type="term" value="P:cell division"/>
    <property type="evidence" value="ECO:0007669"/>
    <property type="project" value="TreeGrafter"/>
</dbReference>
<dbReference type="GO" id="GO:0051603">
    <property type="term" value="P:proteolysis involved in protein catabolic process"/>
    <property type="evidence" value="ECO:0007669"/>
    <property type="project" value="TreeGrafter"/>
</dbReference>
<dbReference type="CDD" id="cd19497">
    <property type="entry name" value="RecA-like_ClpX"/>
    <property type="match status" value="1"/>
</dbReference>
<dbReference type="FunFam" id="1.10.8.60:FF:000002">
    <property type="entry name" value="ATP-dependent Clp protease ATP-binding subunit ClpX"/>
    <property type="match status" value="1"/>
</dbReference>
<dbReference type="FunFam" id="3.40.50.300:FF:000005">
    <property type="entry name" value="ATP-dependent Clp protease ATP-binding subunit ClpX"/>
    <property type="match status" value="1"/>
</dbReference>
<dbReference type="Gene3D" id="1.10.8.60">
    <property type="match status" value="1"/>
</dbReference>
<dbReference type="Gene3D" id="6.20.220.10">
    <property type="entry name" value="ClpX chaperone, C4-type zinc finger domain"/>
    <property type="match status" value="1"/>
</dbReference>
<dbReference type="Gene3D" id="3.40.50.300">
    <property type="entry name" value="P-loop containing nucleotide triphosphate hydrolases"/>
    <property type="match status" value="1"/>
</dbReference>
<dbReference type="HAMAP" id="MF_00175">
    <property type="entry name" value="ClpX"/>
    <property type="match status" value="1"/>
</dbReference>
<dbReference type="InterPro" id="IPR003593">
    <property type="entry name" value="AAA+_ATPase"/>
</dbReference>
<dbReference type="InterPro" id="IPR050052">
    <property type="entry name" value="ATP-dep_Clp_protease_ClpX"/>
</dbReference>
<dbReference type="InterPro" id="IPR003959">
    <property type="entry name" value="ATPase_AAA_core"/>
</dbReference>
<dbReference type="InterPro" id="IPR019489">
    <property type="entry name" value="Clp_ATPase_C"/>
</dbReference>
<dbReference type="InterPro" id="IPR004487">
    <property type="entry name" value="Clp_protease_ATP-bd_su_ClpX"/>
</dbReference>
<dbReference type="InterPro" id="IPR046425">
    <property type="entry name" value="ClpX_bact"/>
</dbReference>
<dbReference type="InterPro" id="IPR027417">
    <property type="entry name" value="P-loop_NTPase"/>
</dbReference>
<dbReference type="InterPro" id="IPR010603">
    <property type="entry name" value="Znf_CppX_C4"/>
</dbReference>
<dbReference type="InterPro" id="IPR038366">
    <property type="entry name" value="Znf_CppX_C4_sf"/>
</dbReference>
<dbReference type="NCBIfam" id="TIGR00382">
    <property type="entry name" value="clpX"/>
    <property type="match status" value="1"/>
</dbReference>
<dbReference type="NCBIfam" id="NF003745">
    <property type="entry name" value="PRK05342.1"/>
    <property type="match status" value="1"/>
</dbReference>
<dbReference type="PANTHER" id="PTHR48102:SF7">
    <property type="entry name" value="ATP-DEPENDENT CLP PROTEASE ATP-BINDING SUBUNIT CLPX-LIKE, MITOCHONDRIAL"/>
    <property type="match status" value="1"/>
</dbReference>
<dbReference type="PANTHER" id="PTHR48102">
    <property type="entry name" value="ATP-DEPENDENT CLP PROTEASE ATP-BINDING SUBUNIT CLPX-LIKE, MITOCHONDRIAL-RELATED"/>
    <property type="match status" value="1"/>
</dbReference>
<dbReference type="Pfam" id="PF07724">
    <property type="entry name" value="AAA_2"/>
    <property type="match status" value="1"/>
</dbReference>
<dbReference type="Pfam" id="PF10431">
    <property type="entry name" value="ClpB_D2-small"/>
    <property type="match status" value="1"/>
</dbReference>
<dbReference type="Pfam" id="PF06689">
    <property type="entry name" value="zf-C4_ClpX"/>
    <property type="match status" value="1"/>
</dbReference>
<dbReference type="SMART" id="SM00382">
    <property type="entry name" value="AAA"/>
    <property type="match status" value="1"/>
</dbReference>
<dbReference type="SMART" id="SM01086">
    <property type="entry name" value="ClpB_D2-small"/>
    <property type="match status" value="1"/>
</dbReference>
<dbReference type="SMART" id="SM00994">
    <property type="entry name" value="zf-C4_ClpX"/>
    <property type="match status" value="1"/>
</dbReference>
<dbReference type="SUPFAM" id="SSF57716">
    <property type="entry name" value="Glucocorticoid receptor-like (DNA-binding domain)"/>
    <property type="match status" value="1"/>
</dbReference>
<dbReference type="SUPFAM" id="SSF52540">
    <property type="entry name" value="P-loop containing nucleoside triphosphate hydrolases"/>
    <property type="match status" value="1"/>
</dbReference>
<dbReference type="PROSITE" id="PS51902">
    <property type="entry name" value="CLPX_ZB"/>
    <property type="match status" value="1"/>
</dbReference>
<proteinExistence type="inferred from homology"/>
<organism>
    <name type="scientific">Listeria monocytogenes serotype 4b (strain F2365)</name>
    <dbReference type="NCBI Taxonomy" id="265669"/>
    <lineage>
        <taxon>Bacteria</taxon>
        <taxon>Bacillati</taxon>
        <taxon>Bacillota</taxon>
        <taxon>Bacilli</taxon>
        <taxon>Bacillales</taxon>
        <taxon>Listeriaceae</taxon>
        <taxon>Listeria</taxon>
    </lineage>
</organism>
<sequence length="419" mass="46398">MFKFNDEKGQLKCSFCGKTQDQVRKLVAGPGVYICDECIELCNEIIEEELGISEFVDFGEVPKPQEIRHILSDYVIGQERAKKALAVAVYNHYKRINSNETKEDEVELSKSNICLIGPTGSGKTLLAQTLARILNVPFAIADATSLTEAGYVGEDVENILLKLIQSADYDVEKAEKGIIYIDEIDKVARKSENPSITRDVSGEGVQQALLKILEGTVASVPPQGGRKHPHQELIQIDTGNILFIVGGAFDGIEQIVKNRMGEKVIGFGTDNAKLKDDETYLSRVVPEDLLKFGLIPEFIGRLPVIATLEQLDEAALVSILTEPKNALVKQYKRMLELDDVELEFEPTALIEIAKEAIERKTGARGLRSIIEQIMLEVMFEIPSRDDITKCIITEKAARGEEEPQLQLEDGSIIPIKTSA</sequence>
<accession>Q720F3</accession>
<feature type="chain" id="PRO_0000160379" description="ATP-dependent Clp protease ATP-binding subunit ClpX">
    <location>
        <begin position="1"/>
        <end position="419"/>
    </location>
</feature>
<feature type="domain" description="ClpX-type ZB" evidence="2">
    <location>
        <begin position="1"/>
        <end position="54"/>
    </location>
</feature>
<feature type="binding site" evidence="2">
    <location>
        <position position="13"/>
    </location>
    <ligand>
        <name>Zn(2+)</name>
        <dbReference type="ChEBI" id="CHEBI:29105"/>
    </ligand>
</feature>
<feature type="binding site" evidence="2">
    <location>
        <position position="16"/>
    </location>
    <ligand>
        <name>Zn(2+)</name>
        <dbReference type="ChEBI" id="CHEBI:29105"/>
    </ligand>
</feature>
<feature type="binding site" evidence="2">
    <location>
        <position position="35"/>
    </location>
    <ligand>
        <name>Zn(2+)</name>
        <dbReference type="ChEBI" id="CHEBI:29105"/>
    </ligand>
</feature>
<feature type="binding site" evidence="2">
    <location>
        <position position="38"/>
    </location>
    <ligand>
        <name>Zn(2+)</name>
        <dbReference type="ChEBI" id="CHEBI:29105"/>
    </ligand>
</feature>
<feature type="binding site" evidence="1">
    <location>
        <begin position="118"/>
        <end position="125"/>
    </location>
    <ligand>
        <name>ATP</name>
        <dbReference type="ChEBI" id="CHEBI:30616"/>
    </ligand>
</feature>